<accession>Q8GZ53</accession>
<accession>Q9FL46</accession>
<name>SOT14_ARATH</name>
<sequence length="347" mass="39653">MAIPSFSMCHKPELLKEGKSEGQEEEGLSYEFQEMLDSLPKERGRRNRYLYLFQGFRCQAKEIQAITSFQKHFQSLPDDVVLATIPKSGTTWLKALTFTILTRHRFDPVSSSSSDHPLLTSNPHDLVPFFEYKLYANGNVPDLSGLASPRTFATHVPFGALKDSVENPSVKVVYLCRNPFDTFISMWHYINNITSESVSAVLLDEAFDLYCRGLLIGFGPFWEHMLGYWRESLKRPEKVLFLKYEDLKEDIETNLKKLASFLGLPFTEEEEQKGVVKAIADLCSFENLKKLEVNKSSKLIQNYENRFLFRKGEVSDLVNYLSPSQVERLSALVDDKLAGSGLTFRLS</sequence>
<dbReference type="EC" id="2.8.2.-"/>
<dbReference type="EMBL" id="AB010697">
    <property type="protein sequence ID" value="BAB11158.1"/>
    <property type="status" value="ALT_INIT"/>
    <property type="molecule type" value="Genomic_DNA"/>
</dbReference>
<dbReference type="EMBL" id="CP002688">
    <property type="protein sequence ID" value="AED91097.1"/>
    <property type="molecule type" value="Genomic_DNA"/>
</dbReference>
<dbReference type="EMBL" id="BT006241">
    <property type="protein sequence ID" value="AAP12890.1"/>
    <property type="molecule type" value="mRNA"/>
</dbReference>
<dbReference type="EMBL" id="AK117202">
    <property type="protein sequence ID" value="BAC41878.1"/>
    <property type="molecule type" value="mRNA"/>
</dbReference>
<dbReference type="RefSeq" id="NP_196317.2">
    <property type="nucleotide sequence ID" value="NM_120782.4"/>
</dbReference>
<dbReference type="SMR" id="Q8GZ53"/>
<dbReference type="FunCoup" id="Q8GZ53">
    <property type="interactions" value="43"/>
</dbReference>
<dbReference type="STRING" id="3702.Q8GZ53"/>
<dbReference type="iPTMnet" id="Q8GZ53"/>
<dbReference type="PaxDb" id="3702-AT5G07000.1"/>
<dbReference type="ProteomicsDB" id="232548"/>
<dbReference type="EnsemblPlants" id="AT5G07000.1">
    <property type="protein sequence ID" value="AT5G07000.1"/>
    <property type="gene ID" value="AT5G07000"/>
</dbReference>
<dbReference type="GeneID" id="830591"/>
<dbReference type="Gramene" id="AT5G07000.1">
    <property type="protein sequence ID" value="AT5G07000.1"/>
    <property type="gene ID" value="AT5G07000"/>
</dbReference>
<dbReference type="KEGG" id="ath:AT5G07000"/>
<dbReference type="Araport" id="AT5G07000"/>
<dbReference type="TAIR" id="AT5G07000">
    <property type="gene designation" value="ST2B"/>
</dbReference>
<dbReference type="eggNOG" id="KOG1584">
    <property type="taxonomic scope" value="Eukaryota"/>
</dbReference>
<dbReference type="HOGENOM" id="CLU_027239_0_1_1"/>
<dbReference type="InParanoid" id="Q8GZ53"/>
<dbReference type="OMA" id="VIKVIQF"/>
<dbReference type="PhylomeDB" id="Q8GZ53"/>
<dbReference type="BioCyc" id="ARA:AT5G07000-MONOMER"/>
<dbReference type="PRO" id="PR:Q8GZ53"/>
<dbReference type="Proteomes" id="UP000006548">
    <property type="component" value="Chromosome 5"/>
</dbReference>
<dbReference type="ExpressionAtlas" id="Q8GZ53">
    <property type="expression patterns" value="baseline and differential"/>
</dbReference>
<dbReference type="GO" id="GO:0005737">
    <property type="term" value="C:cytoplasm"/>
    <property type="evidence" value="ECO:0007669"/>
    <property type="project" value="UniProtKB-SubCell"/>
</dbReference>
<dbReference type="GO" id="GO:0008146">
    <property type="term" value="F:sulfotransferase activity"/>
    <property type="evidence" value="ECO:0007669"/>
    <property type="project" value="InterPro"/>
</dbReference>
<dbReference type="Gene3D" id="3.40.50.300">
    <property type="entry name" value="P-loop containing nucleotide triphosphate hydrolases"/>
    <property type="match status" value="1"/>
</dbReference>
<dbReference type="InterPro" id="IPR027417">
    <property type="entry name" value="P-loop_NTPase"/>
</dbReference>
<dbReference type="InterPro" id="IPR000863">
    <property type="entry name" value="Sulfotransferase_dom"/>
</dbReference>
<dbReference type="PANTHER" id="PTHR11783">
    <property type="entry name" value="SULFOTRANSFERASE SULT"/>
    <property type="match status" value="1"/>
</dbReference>
<dbReference type="Pfam" id="PF00685">
    <property type="entry name" value="Sulfotransfer_1"/>
    <property type="match status" value="1"/>
</dbReference>
<dbReference type="SUPFAM" id="SSF52540">
    <property type="entry name" value="P-loop containing nucleoside triphosphate hydrolases"/>
    <property type="match status" value="1"/>
</dbReference>
<organism>
    <name type="scientific">Arabidopsis thaliana</name>
    <name type="common">Mouse-ear cress</name>
    <dbReference type="NCBI Taxonomy" id="3702"/>
    <lineage>
        <taxon>Eukaryota</taxon>
        <taxon>Viridiplantae</taxon>
        <taxon>Streptophyta</taxon>
        <taxon>Embryophyta</taxon>
        <taxon>Tracheophyta</taxon>
        <taxon>Spermatophyta</taxon>
        <taxon>Magnoliopsida</taxon>
        <taxon>eudicotyledons</taxon>
        <taxon>Gunneridae</taxon>
        <taxon>Pentapetalae</taxon>
        <taxon>rosids</taxon>
        <taxon>malvids</taxon>
        <taxon>Brassicales</taxon>
        <taxon>Brassicaceae</taxon>
        <taxon>Camelineae</taxon>
        <taxon>Arabidopsis</taxon>
    </lineage>
</organism>
<proteinExistence type="evidence at transcript level"/>
<keyword id="KW-0963">Cytoplasm</keyword>
<keyword id="KW-1185">Reference proteome</keyword>
<keyword id="KW-0808">Transferase</keyword>
<feature type="chain" id="PRO_0000417061" description="Cytosolic sulfotransferase 14">
    <location>
        <begin position="1"/>
        <end position="347"/>
    </location>
</feature>
<feature type="active site" description="Proton acceptor" evidence="1">
    <location>
        <position position="155"/>
    </location>
</feature>
<feature type="binding site" evidence="1">
    <location>
        <begin position="87"/>
        <end position="92"/>
    </location>
    <ligand>
        <name>3'-phosphoadenylyl sulfate</name>
        <dbReference type="ChEBI" id="CHEBI:58339"/>
    </ligand>
</feature>
<feature type="binding site" evidence="1">
    <location>
        <position position="177"/>
    </location>
    <ligand>
        <name>3'-phosphoadenylyl sulfate</name>
        <dbReference type="ChEBI" id="CHEBI:58339"/>
    </ligand>
</feature>
<feature type="binding site" evidence="1">
    <location>
        <position position="185"/>
    </location>
    <ligand>
        <name>3'-phosphoadenylyl sulfate</name>
        <dbReference type="ChEBI" id="CHEBI:58339"/>
    </ligand>
</feature>
<feature type="binding site" evidence="1">
    <location>
        <position position="244"/>
    </location>
    <ligand>
        <name>3'-phosphoadenylyl sulfate</name>
        <dbReference type="ChEBI" id="CHEBI:58339"/>
    </ligand>
</feature>
<feature type="binding site" evidence="1">
    <location>
        <begin position="310"/>
        <end position="312"/>
    </location>
    <ligand>
        <name>3'-phosphoadenylyl sulfate</name>
        <dbReference type="ChEBI" id="CHEBI:58339"/>
    </ligand>
</feature>
<reference key="1">
    <citation type="journal article" date="1998" name="DNA Res.">
        <title>Structural analysis of Arabidopsis thaliana chromosome 5. V. Sequence features of the regions of 1,381,565 bp covered by twenty one physically assigned P1 and TAC clones.</title>
        <authorList>
            <person name="Kaneko T."/>
            <person name="Kotani H."/>
            <person name="Nakamura Y."/>
            <person name="Sato S."/>
            <person name="Asamizu E."/>
            <person name="Miyajima N."/>
            <person name="Tabata S."/>
        </authorList>
    </citation>
    <scope>NUCLEOTIDE SEQUENCE [LARGE SCALE GENOMIC DNA]</scope>
    <source>
        <strain>cv. Columbia</strain>
    </source>
</reference>
<reference key="2">
    <citation type="journal article" date="2017" name="Plant J.">
        <title>Araport11: a complete reannotation of the Arabidopsis thaliana reference genome.</title>
        <authorList>
            <person name="Cheng C.Y."/>
            <person name="Krishnakumar V."/>
            <person name="Chan A.P."/>
            <person name="Thibaud-Nissen F."/>
            <person name="Schobel S."/>
            <person name="Town C.D."/>
        </authorList>
    </citation>
    <scope>GENOME REANNOTATION</scope>
    <source>
        <strain>cv. Columbia</strain>
    </source>
</reference>
<reference key="3">
    <citation type="journal article" date="2002" name="Science">
        <title>Functional annotation of a full-length Arabidopsis cDNA collection.</title>
        <authorList>
            <person name="Seki M."/>
            <person name="Narusaka M."/>
            <person name="Kamiya A."/>
            <person name="Ishida J."/>
            <person name="Satou M."/>
            <person name="Sakurai T."/>
            <person name="Nakajima M."/>
            <person name="Enju A."/>
            <person name="Akiyama K."/>
            <person name="Oono Y."/>
            <person name="Muramatsu M."/>
            <person name="Hayashizaki Y."/>
            <person name="Kawai J."/>
            <person name="Carninci P."/>
            <person name="Itoh M."/>
            <person name="Ishii Y."/>
            <person name="Arakawa T."/>
            <person name="Shibata K."/>
            <person name="Shinagawa A."/>
            <person name="Shinozaki K."/>
        </authorList>
    </citation>
    <scope>NUCLEOTIDE SEQUENCE [LARGE SCALE MRNA]</scope>
    <source>
        <strain>cv. Columbia</strain>
    </source>
</reference>
<reference key="4">
    <citation type="journal article" date="2003" name="Science">
        <title>Empirical analysis of transcriptional activity in the Arabidopsis genome.</title>
        <authorList>
            <person name="Yamada K."/>
            <person name="Lim J."/>
            <person name="Dale J.M."/>
            <person name="Chen H."/>
            <person name="Shinn P."/>
            <person name="Palm C.J."/>
            <person name="Southwick A.M."/>
            <person name="Wu H.C."/>
            <person name="Kim C.J."/>
            <person name="Nguyen M."/>
            <person name="Pham P.K."/>
            <person name="Cheuk R.F."/>
            <person name="Karlin-Newmann G."/>
            <person name="Liu S.X."/>
            <person name="Lam B."/>
            <person name="Sakano H."/>
            <person name="Wu T."/>
            <person name="Yu G."/>
            <person name="Miranda M."/>
            <person name="Quach H.L."/>
            <person name="Tripp M."/>
            <person name="Chang C.H."/>
            <person name="Lee J.M."/>
            <person name="Toriumi M.J."/>
            <person name="Chan M.M."/>
            <person name="Tang C.C."/>
            <person name="Onodera C.S."/>
            <person name="Deng J.M."/>
            <person name="Akiyama K."/>
            <person name="Ansari Y."/>
            <person name="Arakawa T."/>
            <person name="Banh J."/>
            <person name="Banno F."/>
            <person name="Bowser L."/>
            <person name="Brooks S.Y."/>
            <person name="Carninci P."/>
            <person name="Chao Q."/>
            <person name="Choy N."/>
            <person name="Enju A."/>
            <person name="Goldsmith A.D."/>
            <person name="Gurjal M."/>
            <person name="Hansen N.F."/>
            <person name="Hayashizaki Y."/>
            <person name="Johnson-Hopson C."/>
            <person name="Hsuan V.W."/>
            <person name="Iida K."/>
            <person name="Karnes M."/>
            <person name="Khan S."/>
            <person name="Koesema E."/>
            <person name="Ishida J."/>
            <person name="Jiang P.X."/>
            <person name="Jones T."/>
            <person name="Kawai J."/>
            <person name="Kamiya A."/>
            <person name="Meyers C."/>
            <person name="Nakajima M."/>
            <person name="Narusaka M."/>
            <person name="Seki M."/>
            <person name="Sakurai T."/>
            <person name="Satou M."/>
            <person name="Tamse R."/>
            <person name="Vaysberg M."/>
            <person name="Wallender E.K."/>
            <person name="Wong C."/>
            <person name="Yamamura Y."/>
            <person name="Yuan S."/>
            <person name="Shinozaki K."/>
            <person name="Davis R.W."/>
            <person name="Theologis A."/>
            <person name="Ecker J.R."/>
        </authorList>
    </citation>
    <scope>NUCLEOTIDE SEQUENCE [LARGE SCALE MRNA]</scope>
    <source>
        <strain>cv. Columbia</strain>
    </source>
</reference>
<reference key="5">
    <citation type="journal article" date="2003" name="J. Biol. Chem.">
        <title>Biochemical and molecular characterization of a hydroxyjasmonate sulfotransferase from Arabidopsis thaliana.</title>
        <authorList>
            <person name="Gidda S.K."/>
            <person name="Miersch O."/>
            <person name="Levitin A."/>
            <person name="Schmidt J."/>
            <person name="Wasternack C."/>
            <person name="Varin L."/>
        </authorList>
    </citation>
    <scope>IDENTIFICATION</scope>
    <scope>FUNCTION</scope>
</reference>
<reference key="6">
    <citation type="journal article" date="2004" name="J. Exp. Bot.">
        <title>The multi-protein family of Arabidopsis sulphotransferases and their relatives in other plant species.</title>
        <authorList>
            <person name="Klein M."/>
            <person name="Papenbrock J."/>
        </authorList>
    </citation>
    <scope>GENE FAMILY</scope>
    <scope>NOMENCLATURE</scope>
</reference>
<protein>
    <recommendedName>
        <fullName>Cytosolic sulfotransferase 14</fullName>
        <shortName>AtSOT14</shortName>
        <ecNumber>2.8.2.-</ecNumber>
    </recommendedName>
    <alternativeName>
        <fullName>Sulfotransferase 2b</fullName>
        <shortName>AtST2b</shortName>
    </alternativeName>
</protein>
<comment type="function">
    <text evidence="2">Sulfotransferase that utilizes 3'-phospho-5'-adenylyl sulfate (PAPS) as sulfonate donor. Not active with 11-hydroxyjasmonate or 12-hydroxyjasmonate.</text>
</comment>
<comment type="subcellular location">
    <subcellularLocation>
        <location evidence="1">Cytoplasm</location>
    </subcellularLocation>
</comment>
<comment type="similarity">
    <text evidence="3">Belongs to the sulfotransferase 1 family.</text>
</comment>
<comment type="sequence caution" evidence="3">
    <conflict type="erroneous initiation">
        <sequence resource="EMBL-CDS" id="BAB11158"/>
    </conflict>
    <text>Truncated N-terminus.</text>
</comment>
<evidence type="ECO:0000250" key="1"/>
<evidence type="ECO:0000269" key="2">
    <source>
    </source>
</evidence>
<evidence type="ECO:0000305" key="3"/>
<gene>
    <name type="primary">SOT14</name>
    <name type="synonym">ST2B</name>
    <name type="ordered locus">At5g07000</name>
    <name type="ORF">MOJ9.17</name>
</gene>